<proteinExistence type="inferred from homology"/>
<gene>
    <name type="primary">Timm10</name>
    <name type="synonym">Tim10</name>
</gene>
<comment type="function">
    <text evidence="1">Mitochondrial intermembrane chaperone that participates in the import and insertion of multi-pass transmembrane proteins into the mitochondrial inner membrane. May also be required for the transfer of beta-barrel precursors from the TOM complex to the sorting and assembly machinery (SAM complex) of the outer membrane. Acts as a chaperone-like protein that protects the hydrophobic precursors from aggregation and guide them through the mitochondrial intermembrane space (By similarity).</text>
</comment>
<comment type="subunit">
    <text evidence="1">Heterohexamer; composed of 3 copies of TIMM9 and 3 copies of TIMM10/TIM10A, named soluble 70 kDa complex. The complex forms a 6-bladed alpha-propeller structure and associates with the TIMM22 component of the TIM22 complex. Interacts with multi-pass transmembrane proteins in transit. Also forms a complex composed of TIMM9, TIMM10/TIM10A and FXC1/TIM10B (By similarity).</text>
</comment>
<comment type="subcellular location">
    <subcellularLocation>
        <location evidence="1">Mitochondrion inner membrane</location>
        <topology evidence="1">Peripheral membrane protein</topology>
        <orientation evidence="1">Intermembrane side</orientation>
    </subcellularLocation>
</comment>
<comment type="domain">
    <text evidence="1">The twin CX3C motif contains 4 conserved Cys residues that form 2 disulfide bonds in the mitochondrial intermembrane space. However, during the transit of TIMM10 from cytoplasm into mitochondrion, the Cys residues probably coordinate zinc, thereby preventing folding and allowing its transfer across mitochondrial outer membrane (By similarity).</text>
</comment>
<comment type="similarity">
    <text evidence="2">Belongs to the small Tim family.</text>
</comment>
<protein>
    <recommendedName>
        <fullName>Mitochondrial import inner membrane translocase subunit Tim10</fullName>
    </recommendedName>
</protein>
<reference key="1">
    <citation type="journal article" date="1999" name="FEBS Lett.">
        <title>The mitochondrial TIM22 preprotein translocase is highly conserved throughout the eukaryotic kingdom.</title>
        <authorList>
            <person name="Bauer M.F."/>
            <person name="Rothbauer U."/>
            <person name="Muehlenbein N."/>
            <person name="Smith R.J.H."/>
            <person name="Gerbitz K.-D."/>
            <person name="Neupert W."/>
            <person name="Brunner M."/>
            <person name="Hofmann S."/>
        </authorList>
    </citation>
    <scope>NUCLEOTIDE SEQUENCE [MRNA]</scope>
</reference>
<reference key="2">
    <citation type="journal article" date="2004" name="Genome Res.">
        <title>The status, quality, and expansion of the NIH full-length cDNA project: the Mammalian Gene Collection (MGC).</title>
        <authorList>
            <consortium name="The MGC Project Team"/>
        </authorList>
    </citation>
    <scope>NUCLEOTIDE SEQUENCE [LARGE SCALE MRNA]</scope>
</reference>
<accession>P62074</accession>
<accession>Q5BKD3</accession>
<accession>Q9WV99</accession>
<accession>Q9WVA0</accession>
<accession>Q9Y5J8</accession>
<organism>
    <name type="scientific">Rattus norvegicus</name>
    <name type="common">Rat</name>
    <dbReference type="NCBI Taxonomy" id="10116"/>
    <lineage>
        <taxon>Eukaryota</taxon>
        <taxon>Metazoa</taxon>
        <taxon>Chordata</taxon>
        <taxon>Craniata</taxon>
        <taxon>Vertebrata</taxon>
        <taxon>Euteleostomi</taxon>
        <taxon>Mammalia</taxon>
        <taxon>Eutheria</taxon>
        <taxon>Euarchontoglires</taxon>
        <taxon>Glires</taxon>
        <taxon>Rodentia</taxon>
        <taxon>Myomorpha</taxon>
        <taxon>Muroidea</taxon>
        <taxon>Muridae</taxon>
        <taxon>Murinae</taxon>
        <taxon>Rattus</taxon>
    </lineage>
</organism>
<keyword id="KW-0143">Chaperone</keyword>
<keyword id="KW-1015">Disulfide bond</keyword>
<keyword id="KW-0472">Membrane</keyword>
<keyword id="KW-0479">Metal-binding</keyword>
<keyword id="KW-0496">Mitochondrion</keyword>
<keyword id="KW-0999">Mitochondrion inner membrane</keyword>
<keyword id="KW-0653">Protein transport</keyword>
<keyword id="KW-1185">Reference proteome</keyword>
<keyword id="KW-0811">Translocation</keyword>
<keyword id="KW-0813">Transport</keyword>
<keyword id="KW-0862">Zinc</keyword>
<name>TIM10_RAT</name>
<sequence>MDPLRAQQLAAELEVEMMADMYNRMTSACHRKCVPPHYKEAELSKGESVCLDRCVSKYLDIHERMGKKLTELSMQDEELMKRVQQSSGPA</sequence>
<dbReference type="EMBL" id="AF150091">
    <property type="protein sequence ID" value="AAD39997.1"/>
    <property type="molecule type" value="mRNA"/>
</dbReference>
<dbReference type="EMBL" id="BC091116">
    <property type="protein sequence ID" value="AAH91116.1"/>
    <property type="molecule type" value="mRNA"/>
</dbReference>
<dbReference type="RefSeq" id="NP_001418352.1">
    <property type="nucleotide sequence ID" value="NM_001431423.1"/>
</dbReference>
<dbReference type="RefSeq" id="NP_001418353.1">
    <property type="nucleotide sequence ID" value="NM_001431424.1"/>
</dbReference>
<dbReference type="RefSeq" id="NP_742071.1">
    <property type="nucleotide sequence ID" value="NM_172074.4"/>
</dbReference>
<dbReference type="RefSeq" id="XP_006234535.1">
    <property type="nucleotide sequence ID" value="XM_006234473.3"/>
</dbReference>
<dbReference type="RefSeq" id="XP_006234536.1">
    <property type="nucleotide sequence ID" value="XM_006234474.3"/>
</dbReference>
<dbReference type="SMR" id="P62074"/>
<dbReference type="FunCoup" id="P62074">
    <property type="interactions" value="2746"/>
</dbReference>
<dbReference type="STRING" id="10116.ENSRNOP00000010619"/>
<dbReference type="iPTMnet" id="P62074"/>
<dbReference type="PhosphoSitePlus" id="P62074"/>
<dbReference type="jPOST" id="P62074"/>
<dbReference type="PaxDb" id="10116-ENSRNOP00000010619"/>
<dbReference type="Ensembl" id="ENSRNOT00000010619.5">
    <property type="protein sequence ID" value="ENSRNOP00000010619.3"/>
    <property type="gene ID" value="ENSRNOG00000007883.5"/>
</dbReference>
<dbReference type="GeneID" id="64464"/>
<dbReference type="KEGG" id="rno:64464"/>
<dbReference type="UCSC" id="RGD:621741">
    <property type="organism name" value="rat"/>
</dbReference>
<dbReference type="AGR" id="RGD:621741"/>
<dbReference type="CTD" id="26519"/>
<dbReference type="RGD" id="621741">
    <property type="gene designation" value="Timm10"/>
</dbReference>
<dbReference type="eggNOG" id="KOG3480">
    <property type="taxonomic scope" value="Eukaryota"/>
</dbReference>
<dbReference type="GeneTree" id="ENSGT00390000003068"/>
<dbReference type="HOGENOM" id="CLU_162151_2_0_1"/>
<dbReference type="InParanoid" id="P62074"/>
<dbReference type="OMA" id="VGENMQK"/>
<dbReference type="OrthoDB" id="274922at2759"/>
<dbReference type="PhylomeDB" id="P62074"/>
<dbReference type="TreeFam" id="TF106193"/>
<dbReference type="PRO" id="PR:P62074"/>
<dbReference type="Proteomes" id="UP000002494">
    <property type="component" value="Chromosome 3"/>
</dbReference>
<dbReference type="Bgee" id="ENSRNOG00000007883">
    <property type="expression patterns" value="Expressed in heart and 20 other cell types or tissues"/>
</dbReference>
<dbReference type="GO" id="GO:0005743">
    <property type="term" value="C:mitochondrial inner membrane"/>
    <property type="evidence" value="ECO:0000266"/>
    <property type="project" value="RGD"/>
</dbReference>
<dbReference type="GO" id="GO:0005758">
    <property type="term" value="C:mitochondrial intermembrane space"/>
    <property type="evidence" value="ECO:0000266"/>
    <property type="project" value="RGD"/>
</dbReference>
<dbReference type="GO" id="GO:0042719">
    <property type="term" value="C:mitochondrial intermembrane space protein transporter complex"/>
    <property type="evidence" value="ECO:0000266"/>
    <property type="project" value="RGD"/>
</dbReference>
<dbReference type="GO" id="GO:0042721">
    <property type="term" value="C:TIM22 mitochondrial import inner membrane insertion complex"/>
    <property type="evidence" value="ECO:0000266"/>
    <property type="project" value="RGD"/>
</dbReference>
<dbReference type="GO" id="GO:0032977">
    <property type="term" value="F:membrane insertase activity"/>
    <property type="evidence" value="ECO:0000266"/>
    <property type="project" value="RGD"/>
</dbReference>
<dbReference type="GO" id="GO:0046872">
    <property type="term" value="F:metal ion binding"/>
    <property type="evidence" value="ECO:0007669"/>
    <property type="project" value="UniProtKB-KW"/>
</dbReference>
<dbReference type="GO" id="GO:0042803">
    <property type="term" value="F:protein homodimerization activity"/>
    <property type="evidence" value="ECO:0000266"/>
    <property type="project" value="RGD"/>
</dbReference>
<dbReference type="GO" id="GO:0051087">
    <property type="term" value="F:protein-folding chaperone binding"/>
    <property type="evidence" value="ECO:0000266"/>
    <property type="project" value="RGD"/>
</dbReference>
<dbReference type="GO" id="GO:0045039">
    <property type="term" value="P:protein insertion into mitochondrial inner membrane"/>
    <property type="evidence" value="ECO:0000266"/>
    <property type="project" value="RGD"/>
</dbReference>
<dbReference type="FunFam" id="1.10.287.810:FF:000002">
    <property type="entry name" value="Mitochondrial import inner membrane translocase subunit tim10"/>
    <property type="match status" value="1"/>
</dbReference>
<dbReference type="Gene3D" id="1.10.287.810">
    <property type="entry name" value="Mitochondrial import inner membrane translocase subunit tim13 like domains"/>
    <property type="match status" value="1"/>
</dbReference>
<dbReference type="InterPro" id="IPR004217">
    <property type="entry name" value="Tim10-like"/>
</dbReference>
<dbReference type="InterPro" id="IPR035427">
    <property type="entry name" value="Tim10-like_dom_sf"/>
</dbReference>
<dbReference type="PANTHER" id="PTHR11038">
    <property type="entry name" value="MITOCHONDRIAL IMPORT INNER MEMBRANE TRANSLOCASE SUBUNIT TIM10"/>
    <property type="match status" value="1"/>
</dbReference>
<dbReference type="PANTHER" id="PTHR11038:SF16">
    <property type="entry name" value="MITOCHONDRIAL IMPORT INNER MEMBRANE TRANSLOCASE SUBUNIT TIM10"/>
    <property type="match status" value="1"/>
</dbReference>
<dbReference type="Pfam" id="PF02953">
    <property type="entry name" value="zf-Tim10_DDP"/>
    <property type="match status" value="1"/>
</dbReference>
<dbReference type="SUPFAM" id="SSF144122">
    <property type="entry name" value="Tim10-like"/>
    <property type="match status" value="1"/>
</dbReference>
<evidence type="ECO:0000250" key="1"/>
<evidence type="ECO:0000305" key="2"/>
<feature type="chain" id="PRO_0000193614" description="Mitochondrial import inner membrane translocase subunit Tim10">
    <location>
        <begin position="1"/>
        <end position="90"/>
    </location>
</feature>
<feature type="short sequence motif" description="Twin CX3C motif">
    <location>
        <begin position="29"/>
        <end position="54"/>
    </location>
</feature>
<feature type="disulfide bond" evidence="1">
    <location>
        <begin position="29"/>
        <end position="54"/>
    </location>
</feature>
<feature type="disulfide bond" evidence="1">
    <location>
        <begin position="33"/>
        <end position="50"/>
    </location>
</feature>